<protein>
    <recommendedName>
        <fullName evidence="1">Ribosome maturation factor RimP</fullName>
    </recommendedName>
</protein>
<sequence length="151" mass="16599">MATIESKLVEMLTVPVEALGFKLWGIEYIQAGRHSILRVFIDHENGINIEDCAEASRQVSAVMDVEDPISTEYTLEVSSPGVDRPLFTAEQYRAYIGEETKVQLTMPVAGSRNLKGVISSVDGQMLTITVDGKDLIVALDNIRKGNVIAKF</sequence>
<accession>Q086H4</accession>
<keyword id="KW-0963">Cytoplasm</keyword>
<keyword id="KW-1185">Reference proteome</keyword>
<keyword id="KW-0690">Ribosome biogenesis</keyword>
<name>RIMP_SHEFN</name>
<organism>
    <name type="scientific">Shewanella frigidimarina (strain NCIMB 400)</name>
    <dbReference type="NCBI Taxonomy" id="318167"/>
    <lineage>
        <taxon>Bacteria</taxon>
        <taxon>Pseudomonadati</taxon>
        <taxon>Pseudomonadota</taxon>
        <taxon>Gammaproteobacteria</taxon>
        <taxon>Alteromonadales</taxon>
        <taxon>Shewanellaceae</taxon>
        <taxon>Shewanella</taxon>
    </lineage>
</organism>
<proteinExistence type="inferred from homology"/>
<feature type="chain" id="PRO_0000384769" description="Ribosome maturation factor RimP">
    <location>
        <begin position="1"/>
        <end position="151"/>
    </location>
</feature>
<evidence type="ECO:0000255" key="1">
    <source>
        <dbReference type="HAMAP-Rule" id="MF_01077"/>
    </source>
</evidence>
<evidence type="ECO:0000305" key="2"/>
<reference key="1">
    <citation type="submission" date="2006-08" db="EMBL/GenBank/DDBJ databases">
        <title>Complete sequence of Shewanella frigidimarina NCIMB 400.</title>
        <authorList>
            <consortium name="US DOE Joint Genome Institute"/>
            <person name="Copeland A."/>
            <person name="Lucas S."/>
            <person name="Lapidus A."/>
            <person name="Barry K."/>
            <person name="Detter J.C."/>
            <person name="Glavina del Rio T."/>
            <person name="Hammon N."/>
            <person name="Israni S."/>
            <person name="Dalin E."/>
            <person name="Tice H."/>
            <person name="Pitluck S."/>
            <person name="Fredrickson J.K."/>
            <person name="Kolker E."/>
            <person name="McCuel L.A."/>
            <person name="DiChristina T."/>
            <person name="Nealson K.H."/>
            <person name="Newman D."/>
            <person name="Tiedje J.M."/>
            <person name="Zhou J."/>
            <person name="Romine M.F."/>
            <person name="Culley D.E."/>
            <person name="Serres M."/>
            <person name="Chertkov O."/>
            <person name="Brettin T."/>
            <person name="Bruce D."/>
            <person name="Han C."/>
            <person name="Tapia R."/>
            <person name="Gilna P."/>
            <person name="Schmutz J."/>
            <person name="Larimer F."/>
            <person name="Land M."/>
            <person name="Hauser L."/>
            <person name="Kyrpides N."/>
            <person name="Mikhailova N."/>
            <person name="Richardson P."/>
        </authorList>
    </citation>
    <scope>NUCLEOTIDE SEQUENCE [LARGE SCALE GENOMIC DNA]</scope>
    <source>
        <strain>NCIMB 400</strain>
    </source>
</reference>
<dbReference type="EMBL" id="CP000447">
    <property type="protein sequence ID" value="ABI70841.1"/>
    <property type="status" value="ALT_INIT"/>
    <property type="molecule type" value="Genomic_DNA"/>
</dbReference>
<dbReference type="RefSeq" id="WP_041413431.1">
    <property type="nucleotide sequence ID" value="NC_008345.1"/>
</dbReference>
<dbReference type="SMR" id="Q086H4"/>
<dbReference type="STRING" id="318167.Sfri_0988"/>
<dbReference type="KEGG" id="sfr:Sfri_0988"/>
<dbReference type="eggNOG" id="COG0779">
    <property type="taxonomic scope" value="Bacteria"/>
</dbReference>
<dbReference type="HOGENOM" id="CLU_070525_1_1_6"/>
<dbReference type="OrthoDB" id="9805006at2"/>
<dbReference type="Proteomes" id="UP000000684">
    <property type="component" value="Chromosome"/>
</dbReference>
<dbReference type="GO" id="GO:0005829">
    <property type="term" value="C:cytosol"/>
    <property type="evidence" value="ECO:0007669"/>
    <property type="project" value="TreeGrafter"/>
</dbReference>
<dbReference type="GO" id="GO:0000028">
    <property type="term" value="P:ribosomal small subunit assembly"/>
    <property type="evidence" value="ECO:0007669"/>
    <property type="project" value="TreeGrafter"/>
</dbReference>
<dbReference type="GO" id="GO:0006412">
    <property type="term" value="P:translation"/>
    <property type="evidence" value="ECO:0007669"/>
    <property type="project" value="TreeGrafter"/>
</dbReference>
<dbReference type="CDD" id="cd01734">
    <property type="entry name" value="YlxS_C"/>
    <property type="match status" value="1"/>
</dbReference>
<dbReference type="FunFam" id="3.30.300.70:FF:000001">
    <property type="entry name" value="Ribosome maturation factor RimP"/>
    <property type="match status" value="1"/>
</dbReference>
<dbReference type="Gene3D" id="2.30.30.180">
    <property type="entry name" value="Ribosome maturation factor RimP, C-terminal domain"/>
    <property type="match status" value="1"/>
</dbReference>
<dbReference type="Gene3D" id="3.30.300.70">
    <property type="entry name" value="RimP-like superfamily, N-terminal"/>
    <property type="match status" value="1"/>
</dbReference>
<dbReference type="HAMAP" id="MF_01077">
    <property type="entry name" value="RimP"/>
    <property type="match status" value="1"/>
</dbReference>
<dbReference type="InterPro" id="IPR003728">
    <property type="entry name" value="Ribosome_maturation_RimP"/>
</dbReference>
<dbReference type="InterPro" id="IPR028998">
    <property type="entry name" value="RimP_C"/>
</dbReference>
<dbReference type="InterPro" id="IPR036847">
    <property type="entry name" value="RimP_C_sf"/>
</dbReference>
<dbReference type="InterPro" id="IPR028989">
    <property type="entry name" value="RimP_N"/>
</dbReference>
<dbReference type="InterPro" id="IPR035956">
    <property type="entry name" value="RimP_N_sf"/>
</dbReference>
<dbReference type="NCBIfam" id="NF000927">
    <property type="entry name" value="PRK00092.1-1"/>
    <property type="match status" value="1"/>
</dbReference>
<dbReference type="PANTHER" id="PTHR33867">
    <property type="entry name" value="RIBOSOME MATURATION FACTOR RIMP"/>
    <property type="match status" value="1"/>
</dbReference>
<dbReference type="PANTHER" id="PTHR33867:SF1">
    <property type="entry name" value="RIBOSOME MATURATION FACTOR RIMP"/>
    <property type="match status" value="1"/>
</dbReference>
<dbReference type="Pfam" id="PF17384">
    <property type="entry name" value="DUF150_C"/>
    <property type="match status" value="1"/>
</dbReference>
<dbReference type="Pfam" id="PF02576">
    <property type="entry name" value="RimP_N"/>
    <property type="match status" value="1"/>
</dbReference>
<dbReference type="SUPFAM" id="SSF74942">
    <property type="entry name" value="YhbC-like, C-terminal domain"/>
    <property type="match status" value="1"/>
</dbReference>
<dbReference type="SUPFAM" id="SSF75420">
    <property type="entry name" value="YhbC-like, N-terminal domain"/>
    <property type="match status" value="1"/>
</dbReference>
<gene>
    <name evidence="1" type="primary">rimP</name>
    <name type="ordered locus">Sfri_0988</name>
</gene>
<comment type="function">
    <text evidence="1">Required for maturation of 30S ribosomal subunits.</text>
</comment>
<comment type="subcellular location">
    <subcellularLocation>
        <location evidence="1">Cytoplasm</location>
    </subcellularLocation>
</comment>
<comment type="similarity">
    <text evidence="1">Belongs to the RimP family.</text>
</comment>
<comment type="sequence caution" evidence="2">
    <conflict type="erroneous initiation">
        <sequence resource="EMBL-CDS" id="ABI70841"/>
    </conflict>
</comment>